<accession>Q9XHP1</accession>
<feature type="signal peptide" evidence="3">
    <location>
        <begin position="1"/>
        <end position="19"/>
    </location>
</feature>
<feature type="propeptide" id="PRO_0000043211" evidence="2">
    <location>
        <begin position="20"/>
        <end position="38"/>
    </location>
</feature>
<feature type="chain" id="PRO_0000043212" description="2S seed storage protein 1 small subunit" evidence="2">
    <location>
        <begin position="39"/>
        <end position="68"/>
    </location>
</feature>
<feature type="propeptide" id="PRO_0000043213" evidence="2">
    <location>
        <begin position="69"/>
        <end position="76"/>
    </location>
</feature>
<feature type="chain" id="PRO_0000043214" description="2S seed storage protein 1 large subunit" evidence="2">
    <location>
        <begin position="77"/>
        <end position="146"/>
    </location>
</feature>
<feature type="propeptide" id="PRO_0000043215" evidence="2">
    <location>
        <begin position="147"/>
        <end position="148"/>
    </location>
</feature>
<feature type="region of interest" description="Involved in IgE-binding" evidence="6">
    <location>
        <begin position="24"/>
        <end position="94"/>
    </location>
</feature>
<feature type="region of interest" description="Immunodominant epitope; binds to IgE of 14 patients out of 15 tested" evidence="7">
    <location>
        <begin position="46"/>
        <end position="55"/>
    </location>
</feature>
<feature type="region of interest" description="Immunodominant epitope; binds to IgE of 14 patients out of 15 tested" evidence="7">
    <location>
        <begin position="48"/>
        <end position="57"/>
    </location>
</feature>
<feature type="region of interest" description="Immunodominant epitope; binds to IgE of 14 patients out of 15 tested" evidence="7">
    <location>
        <begin position="76"/>
        <end position="86"/>
    </location>
</feature>
<feature type="disulfide bond" description="Interchain (between small and large chains)" evidence="1">
    <location>
        <begin position="42"/>
        <end position="97"/>
    </location>
</feature>
<feature type="disulfide bond" description="Interchain (between small and large chains)" evidence="1">
    <location>
        <begin position="54"/>
        <end position="86"/>
    </location>
</feature>
<feature type="disulfide bond" evidence="1">
    <location>
        <begin position="87"/>
        <end position="133"/>
    </location>
</feature>
<feature type="disulfide bond" evidence="1">
    <location>
        <begin position="99"/>
        <end position="141"/>
    </location>
</feature>
<dbReference type="EMBL" id="AF091841">
    <property type="protein sequence ID" value="AAD42943.1"/>
    <property type="molecule type" value="mRNA"/>
</dbReference>
<dbReference type="RefSeq" id="NP_001412437.1">
    <property type="nucleotide sequence ID" value="NM_001425508.1"/>
</dbReference>
<dbReference type="RefSeq" id="XP_011095387.1">
    <property type="nucleotide sequence ID" value="XM_011097085.1"/>
</dbReference>
<dbReference type="SMR" id="Q9XHP1"/>
<dbReference type="Allergome" id="3472">
    <property type="allergen name" value="Ses i 2.0101"/>
</dbReference>
<dbReference type="Allergome" id="625">
    <property type="allergen name" value="Ses i 2"/>
</dbReference>
<dbReference type="EnsemblPlants" id="SIN_1014447.t">
    <property type="protein sequence ID" value="SIN_1014447.t.cds1"/>
    <property type="gene ID" value="SIN_1014447"/>
</dbReference>
<dbReference type="GeneID" id="105174860"/>
<dbReference type="Gramene" id="SIN_1014447.t">
    <property type="protein sequence ID" value="SIN_1014447.t.cds1"/>
    <property type="gene ID" value="SIN_1014447"/>
</dbReference>
<dbReference type="KEGG" id="sind:105174860"/>
<dbReference type="InParanoid" id="Q9XHP1"/>
<dbReference type="OrthoDB" id="913620at2759"/>
<dbReference type="PhylomeDB" id="Q9XHP1"/>
<dbReference type="Proteomes" id="UP000504604">
    <property type="component" value="Linkage group LG12"/>
</dbReference>
<dbReference type="GO" id="GO:0042735">
    <property type="term" value="C:endosperm protein body"/>
    <property type="evidence" value="ECO:0000303"/>
    <property type="project" value="UniProtKB"/>
</dbReference>
<dbReference type="GO" id="GO:0019863">
    <property type="term" value="F:IgE binding"/>
    <property type="evidence" value="ECO:0007669"/>
    <property type="project" value="UniProtKB-KW"/>
</dbReference>
<dbReference type="GO" id="GO:0045735">
    <property type="term" value="F:nutrient reservoir activity"/>
    <property type="evidence" value="ECO:0000303"/>
    <property type="project" value="UniProtKB"/>
</dbReference>
<dbReference type="GO" id="GO:0010431">
    <property type="term" value="P:seed maturation"/>
    <property type="evidence" value="ECO:0000270"/>
    <property type="project" value="UniProtKB"/>
</dbReference>
<dbReference type="CDD" id="cd00261">
    <property type="entry name" value="AAI_SS"/>
    <property type="match status" value="1"/>
</dbReference>
<dbReference type="Gene3D" id="1.10.110.10">
    <property type="entry name" value="Plant lipid-transfer and hydrophobic proteins"/>
    <property type="match status" value="1"/>
</dbReference>
<dbReference type="InterPro" id="IPR036312">
    <property type="entry name" value="Bifun_inhib/LTP/seed_sf"/>
</dbReference>
<dbReference type="InterPro" id="IPR016140">
    <property type="entry name" value="Bifunc_inhib/LTP/seed_store"/>
</dbReference>
<dbReference type="InterPro" id="IPR000617">
    <property type="entry name" value="Napin/2SS/CON"/>
</dbReference>
<dbReference type="PANTHER" id="PTHR35496">
    <property type="entry name" value="2S SEED STORAGE PROTEIN 1-RELATED"/>
    <property type="match status" value="1"/>
</dbReference>
<dbReference type="PANTHER" id="PTHR35496:SF4">
    <property type="entry name" value="2S SULFUR-RICH SEED STORAGE PROTEIN 2-LIKE"/>
    <property type="match status" value="1"/>
</dbReference>
<dbReference type="Pfam" id="PF00234">
    <property type="entry name" value="Tryp_alpha_amyl"/>
    <property type="match status" value="1"/>
</dbReference>
<dbReference type="SMART" id="SM00499">
    <property type="entry name" value="AAI"/>
    <property type="match status" value="1"/>
</dbReference>
<dbReference type="SUPFAM" id="SSF47699">
    <property type="entry name" value="Bifunctional inhibitor/lipid-transfer protein/seed storage 2S albumin"/>
    <property type="match status" value="1"/>
</dbReference>
<proteinExistence type="evidence at protein level"/>
<protein>
    <recommendedName>
        <fullName>2S seed storage protein 1</fullName>
    </recommendedName>
    <alternativeName>
        <fullName evidence="8 9 10">2S albumin</fullName>
    </alternativeName>
    <alternativeName>
        <fullName>2S albumin storage protein</fullName>
    </alternativeName>
    <alternativeName>
        <fullName evidence="9">Allergen Ses i 2</fullName>
    </alternativeName>
    <alternativeName>
        <fullName evidence="8 11">Beta-globulin</fullName>
    </alternativeName>
    <allergenName evidence="12">Ses i 2.0101</allergenName>
    <component>
        <recommendedName>
            <fullName>2S seed storage protein 1 small subunit</fullName>
        </recommendedName>
    </component>
    <component>
        <recommendedName>
            <fullName>2S seed storage protein 1 large subunit</fullName>
        </recommendedName>
    </component>
</protein>
<name>2SS1_SESIN</name>
<comment type="function">
    <text evidence="13 14 15">Seed storage protein.</text>
</comment>
<comment type="subunit">
    <text evidence="12">The mature protein consists of a small and a large chain linked by disulfide bonds.</text>
</comment>
<comment type="tissue specificity">
    <text evidence="4 5 6">Expressed in seeds (at protein level).</text>
</comment>
<comment type="developmental stage">
    <text evidence="4">Expressed during seed maturation. Expressed in the maturing seeds 24 days after flowering.</text>
</comment>
<comment type="allergen">
    <text evidence="5 6 7">Causes an allergic reaction in human. Binds to IgE of patients allergic to sesame seeds (PubMed:12110835, PubMed:12842185, PubMed:15536424). Binds to IgE in 92% of the 24 patients tested (PubMed:12842185). Binds to IgE in 30% of the 20 patients tested (PubMed:12110835).</text>
</comment>
<comment type="similarity">
    <text evidence="3">Belongs to the 2S seed storage albumins family.</text>
</comment>
<keyword id="KW-0020">Allergen</keyword>
<keyword id="KW-0903">Direct protein sequencing</keyword>
<keyword id="KW-1015">Disulfide bond</keyword>
<keyword id="KW-0389">IgE-binding protein</keyword>
<keyword id="KW-1185">Reference proteome</keyword>
<keyword id="KW-0708">Seed storage protein</keyword>
<keyword id="KW-0732">Signal</keyword>
<keyword id="KW-0758">Storage protein</keyword>
<sequence length="148" mass="17524">MARFTIVLAVLFAAALVSASAHKTVVTTSVAEEGEEENQRGCEWESRQCQMRHCMQWMRSMRGQYEESFLRSAEANQGQFEHFRECCNELRDVKSHCRCEALRCMMRQMQQEYGMEQEMQQMQQMMQYLPRMCGMSYPTECRMRPIFA</sequence>
<evidence type="ECO:0000250" key="1">
    <source>
        <dbReference type="UniProtKB" id="P04403"/>
    </source>
</evidence>
<evidence type="ECO:0000250" key="2">
    <source>
        <dbReference type="UniProtKB" id="P15457"/>
    </source>
</evidence>
<evidence type="ECO:0000255" key="3"/>
<evidence type="ECO:0000269" key="4">
    <source>
    </source>
</evidence>
<evidence type="ECO:0000269" key="5">
    <source>
    </source>
</evidence>
<evidence type="ECO:0000269" key="6">
    <source>
    </source>
</evidence>
<evidence type="ECO:0000269" key="7">
    <source>
    </source>
</evidence>
<evidence type="ECO:0000303" key="8">
    <source>
    </source>
</evidence>
<evidence type="ECO:0000303" key="9">
    <source>
    </source>
</evidence>
<evidence type="ECO:0000303" key="10">
    <source>
    </source>
</evidence>
<evidence type="ECO:0000303" key="11">
    <source>
    </source>
</evidence>
<evidence type="ECO:0000305" key="12"/>
<evidence type="ECO:0000305" key="13">
    <source>
    </source>
</evidence>
<evidence type="ECO:0000305" key="14">
    <source>
    </source>
</evidence>
<evidence type="ECO:0000305" key="15">
    <source>
    </source>
</evidence>
<evidence type="ECO:0000312" key="16">
    <source>
        <dbReference type="EMBL" id="AAD42943.1"/>
    </source>
</evidence>
<organism>
    <name type="scientific">Sesamum indicum</name>
    <name type="common">Oriental sesame</name>
    <name type="synonym">Sesamum orientale</name>
    <dbReference type="NCBI Taxonomy" id="4182"/>
    <lineage>
        <taxon>Eukaryota</taxon>
        <taxon>Viridiplantae</taxon>
        <taxon>Streptophyta</taxon>
        <taxon>Embryophyta</taxon>
        <taxon>Tracheophyta</taxon>
        <taxon>Spermatophyta</taxon>
        <taxon>Magnoliopsida</taxon>
        <taxon>eudicotyledons</taxon>
        <taxon>Gunneridae</taxon>
        <taxon>Pentapetalae</taxon>
        <taxon>asterids</taxon>
        <taxon>lamiids</taxon>
        <taxon>Lamiales</taxon>
        <taxon>Pedaliaceae</taxon>
        <taxon>Sesamum</taxon>
    </lineage>
</organism>
<reference evidence="16" key="1">
    <citation type="journal article" date="1999" name="J. Agric. Food Chem.">
        <title>Molecular cloning of 11S globulin and 2S albumin, the two major seed storage proteins in sesame.</title>
        <authorList>
            <person name="Tai S.S.K."/>
            <person name="Wu L.S.H."/>
            <person name="Chen E.C.F."/>
            <person name="Tzen J.T.C."/>
        </authorList>
    </citation>
    <scope>NUCLEOTIDE SEQUENCE [MRNA]</scope>
    <scope>TISSUE SPECIFICITY</scope>
    <scope>DEVELOPMENTAL STAGE</scope>
    <source>
        <strain evidence="8">cv. Tainan 1</strain>
        <tissue evidence="4">Seed</tissue>
    </source>
</reference>
<reference key="2">
    <citation type="journal article" date="2003" name="Food Chem. Toxicol.">
        <title>Allergy to sesame in humans is associated primarily with IgE antibody to a 14 kDa 2S albumin precursor.</title>
        <authorList>
            <person name="Wolff N."/>
            <person name="Cogan U."/>
            <person name="Admon A."/>
            <person name="Dalal I."/>
            <person name="Katz Y."/>
            <person name="Hodos N."/>
            <person name="Karin N."/>
            <person name="Yannai S."/>
        </authorList>
    </citation>
    <scope>PROTEIN SEQUENCE OF 41-47; 53-59 AND 132-142</scope>
    <scope>IDENTIFICATION BY MASS SPECTROMETRY</scope>
    <scope>TISSUE SPECIFICITY</scope>
    <scope>ALLERGEN</scope>
    <scope>REGION</scope>
</reference>
<reference key="3">
    <citation type="journal article" date="2002" name="J. Allergy Clin. Immunol.">
        <title>Identification of sesame seed allergens by 2-dimensional proteomics and Edman sequencing: seed storage proteins as common food allergens.</title>
        <authorList>
            <person name="Beyer K."/>
            <person name="Bardina L."/>
            <person name="Grishina G."/>
            <person name="Sampson H.A."/>
        </authorList>
    </citation>
    <scope>PROTEIN SEQUENCE OF 108-131</scope>
    <scope>IDENTIFICATION BY MASS SPECTROMETRY</scope>
    <scope>TISSUE SPECIFICITY</scope>
    <scope>ALLERGEN</scope>
</reference>
<reference key="4">
    <citation type="journal article" date="2004" name="J. Allergy Clin. Immunol.">
        <title>Identification and characterization of linear B-cell epitopes of beta-globulin, a major allergen of sesame seeds.</title>
        <authorList>
            <person name="Wolff N."/>
            <person name="Yannai S."/>
            <person name="Karin N."/>
            <person name="Levy Y."/>
            <person name="Reifen R."/>
            <person name="Dalal I."/>
            <person name="Cogan U."/>
        </authorList>
    </citation>
    <scope>ALLERGEN</scope>
    <scope>REGIONS</scope>
</reference>